<protein>
    <recommendedName>
        <fullName evidence="1">ATP phosphoribosyltransferase</fullName>
        <shortName evidence="1">ATP-PRT</shortName>
        <shortName evidence="1">ATP-PRTase</shortName>
        <ecNumber evidence="1">2.4.2.17</ecNumber>
    </recommendedName>
</protein>
<evidence type="ECO:0000255" key="1">
    <source>
        <dbReference type="HAMAP-Rule" id="MF_00079"/>
    </source>
</evidence>
<feature type="chain" id="PRO_1000004444" description="ATP phosphoribosyltransferase">
    <location>
        <begin position="1"/>
        <end position="283"/>
    </location>
</feature>
<sequence>MLRIAVQSKGRLFEETMALLQEADIKISTSKRILLVQSSNFPIEVLFLRDDDIPQSVAGGVADLGIVGENEFVERKEDAEVIKRLGFSKCRLSLAIPKDVDYPGLSWFEGRKIATSYPGILKDFMDRNGIHSDIHVITGSVEIAPGISLADAIFDIVSSGSTLVSNSLKEVEVVMKSEALLIGNKNMSEEKKEILNELLFRIEAVKAAEDKKYVLMNAPTERLKEIIEVLPGMKSPTVMPLAQEGWSSVHTVLDEKRFWEIIGKLKALGAEGILVLPIEKMIL</sequence>
<proteinExistence type="inferred from homology"/>
<reference key="1">
    <citation type="journal article" date="2007" name="PLoS Biol.">
        <title>Evolution of symbiotic bacteria in the distal human intestine.</title>
        <authorList>
            <person name="Xu J."/>
            <person name="Mahowald M.A."/>
            <person name="Ley R.E."/>
            <person name="Lozupone C.A."/>
            <person name="Hamady M."/>
            <person name="Martens E.C."/>
            <person name="Henrissat B."/>
            <person name="Coutinho P.M."/>
            <person name="Minx P."/>
            <person name="Latreille P."/>
            <person name="Cordum H."/>
            <person name="Van Brunt A."/>
            <person name="Kim K."/>
            <person name="Fulton R.S."/>
            <person name="Fulton L.A."/>
            <person name="Clifton S.W."/>
            <person name="Wilson R.K."/>
            <person name="Knight R.D."/>
            <person name="Gordon J.I."/>
        </authorList>
    </citation>
    <scope>NUCLEOTIDE SEQUENCE [LARGE SCALE GENOMIC DNA]</scope>
    <source>
        <strain>ATCC 8482 / DSM 1447 / JCM 5826 / CCUG 4940 / NBRC 14291 / NCTC 11154</strain>
    </source>
</reference>
<comment type="function">
    <text evidence="1">Catalyzes the condensation of ATP and 5-phosphoribose 1-diphosphate to form N'-(5'-phosphoribosyl)-ATP (PR-ATP). Has a crucial role in the pathway because the rate of histidine biosynthesis seems to be controlled primarily by regulation of HisG enzymatic activity.</text>
</comment>
<comment type="catalytic activity">
    <reaction evidence="1">
        <text>1-(5-phospho-beta-D-ribosyl)-ATP + diphosphate = 5-phospho-alpha-D-ribose 1-diphosphate + ATP</text>
        <dbReference type="Rhea" id="RHEA:18473"/>
        <dbReference type="ChEBI" id="CHEBI:30616"/>
        <dbReference type="ChEBI" id="CHEBI:33019"/>
        <dbReference type="ChEBI" id="CHEBI:58017"/>
        <dbReference type="ChEBI" id="CHEBI:73183"/>
        <dbReference type="EC" id="2.4.2.17"/>
    </reaction>
</comment>
<comment type="cofactor">
    <cofactor evidence="1">
        <name>Mg(2+)</name>
        <dbReference type="ChEBI" id="CHEBI:18420"/>
    </cofactor>
</comment>
<comment type="activity regulation">
    <text evidence="1">Feedback inhibited by histidine.</text>
</comment>
<comment type="pathway">
    <text evidence="1">Amino-acid biosynthesis; L-histidine biosynthesis; L-histidine from 5-phospho-alpha-D-ribose 1-diphosphate: step 1/9.</text>
</comment>
<comment type="subcellular location">
    <subcellularLocation>
        <location evidence="1">Cytoplasm</location>
    </subcellularLocation>
</comment>
<comment type="similarity">
    <text evidence="1">Belongs to the ATP phosphoribosyltransferase family. Long subfamily.</text>
</comment>
<organism>
    <name type="scientific">Phocaeicola vulgatus (strain ATCC 8482 / DSM 1447 / JCM 5826 / CCUG 4940 / NBRC 14291 / NCTC 11154)</name>
    <name type="common">Bacteroides vulgatus</name>
    <dbReference type="NCBI Taxonomy" id="435590"/>
    <lineage>
        <taxon>Bacteria</taxon>
        <taxon>Pseudomonadati</taxon>
        <taxon>Bacteroidota</taxon>
        <taxon>Bacteroidia</taxon>
        <taxon>Bacteroidales</taxon>
        <taxon>Bacteroidaceae</taxon>
        <taxon>Phocaeicola</taxon>
    </lineage>
</organism>
<name>HIS1_PHOV8</name>
<accession>A6L2V6</accession>
<keyword id="KW-0028">Amino-acid biosynthesis</keyword>
<keyword id="KW-0067">ATP-binding</keyword>
<keyword id="KW-0963">Cytoplasm</keyword>
<keyword id="KW-0328">Glycosyltransferase</keyword>
<keyword id="KW-0368">Histidine biosynthesis</keyword>
<keyword id="KW-0460">Magnesium</keyword>
<keyword id="KW-0479">Metal-binding</keyword>
<keyword id="KW-0547">Nucleotide-binding</keyword>
<keyword id="KW-0808">Transferase</keyword>
<dbReference type="EC" id="2.4.2.17" evidence="1"/>
<dbReference type="EMBL" id="CP000139">
    <property type="protein sequence ID" value="ABR40020.1"/>
    <property type="molecule type" value="Genomic_DNA"/>
</dbReference>
<dbReference type="RefSeq" id="WP_005846273.1">
    <property type="nucleotide sequence ID" value="NZ_JANSWM010000034.1"/>
</dbReference>
<dbReference type="SMR" id="A6L2V6"/>
<dbReference type="STRING" id="435590.BVU_2361"/>
<dbReference type="PaxDb" id="435590-BVU_2361"/>
<dbReference type="GeneID" id="82154631"/>
<dbReference type="KEGG" id="bvu:BVU_2361"/>
<dbReference type="eggNOG" id="COG0040">
    <property type="taxonomic scope" value="Bacteria"/>
</dbReference>
<dbReference type="HOGENOM" id="CLU_038115_1_0_10"/>
<dbReference type="BioCyc" id="BVUL435590:G1G59-2456-MONOMER"/>
<dbReference type="UniPathway" id="UPA00031">
    <property type="reaction ID" value="UER00006"/>
</dbReference>
<dbReference type="Proteomes" id="UP000002861">
    <property type="component" value="Chromosome"/>
</dbReference>
<dbReference type="GO" id="GO:0005737">
    <property type="term" value="C:cytoplasm"/>
    <property type="evidence" value="ECO:0007669"/>
    <property type="project" value="UniProtKB-SubCell"/>
</dbReference>
<dbReference type="GO" id="GO:0005524">
    <property type="term" value="F:ATP binding"/>
    <property type="evidence" value="ECO:0007669"/>
    <property type="project" value="UniProtKB-KW"/>
</dbReference>
<dbReference type="GO" id="GO:0003879">
    <property type="term" value="F:ATP phosphoribosyltransferase activity"/>
    <property type="evidence" value="ECO:0007669"/>
    <property type="project" value="UniProtKB-UniRule"/>
</dbReference>
<dbReference type="GO" id="GO:0000287">
    <property type="term" value="F:magnesium ion binding"/>
    <property type="evidence" value="ECO:0007669"/>
    <property type="project" value="UniProtKB-UniRule"/>
</dbReference>
<dbReference type="GO" id="GO:0000105">
    <property type="term" value="P:L-histidine biosynthetic process"/>
    <property type="evidence" value="ECO:0007669"/>
    <property type="project" value="UniProtKB-UniRule"/>
</dbReference>
<dbReference type="CDD" id="cd13592">
    <property type="entry name" value="PBP2_HisGL2"/>
    <property type="match status" value="1"/>
</dbReference>
<dbReference type="FunFam" id="3.30.70.120:FF:000002">
    <property type="entry name" value="ATP phosphoribosyltransferase"/>
    <property type="match status" value="1"/>
</dbReference>
<dbReference type="FunFam" id="3.40.190.10:FF:000008">
    <property type="entry name" value="ATP phosphoribosyltransferase"/>
    <property type="match status" value="1"/>
</dbReference>
<dbReference type="FunFam" id="3.40.190.10:FF:000082">
    <property type="entry name" value="ATP phosphoribosyltransferase"/>
    <property type="match status" value="1"/>
</dbReference>
<dbReference type="Gene3D" id="3.30.70.120">
    <property type="match status" value="1"/>
</dbReference>
<dbReference type="Gene3D" id="3.40.190.10">
    <property type="entry name" value="Periplasmic binding protein-like II"/>
    <property type="match status" value="2"/>
</dbReference>
<dbReference type="HAMAP" id="MF_00079">
    <property type="entry name" value="HisG_Long"/>
    <property type="match status" value="1"/>
</dbReference>
<dbReference type="InterPro" id="IPR020621">
    <property type="entry name" value="ATP-PRT_HisG_long"/>
</dbReference>
<dbReference type="InterPro" id="IPR013820">
    <property type="entry name" value="ATP_PRibTrfase_cat"/>
</dbReference>
<dbReference type="InterPro" id="IPR001348">
    <property type="entry name" value="ATP_PRibTrfase_HisG"/>
</dbReference>
<dbReference type="InterPro" id="IPR013115">
    <property type="entry name" value="HisG_C"/>
</dbReference>
<dbReference type="InterPro" id="IPR011322">
    <property type="entry name" value="N-reg_PII-like_a/b"/>
</dbReference>
<dbReference type="InterPro" id="IPR015867">
    <property type="entry name" value="N-reg_PII/ATP_PRibTrfase_C"/>
</dbReference>
<dbReference type="NCBIfam" id="TIGR00070">
    <property type="entry name" value="hisG"/>
    <property type="match status" value="1"/>
</dbReference>
<dbReference type="NCBIfam" id="TIGR03455">
    <property type="entry name" value="HisG_C-term"/>
    <property type="match status" value="1"/>
</dbReference>
<dbReference type="PANTHER" id="PTHR21403:SF8">
    <property type="entry name" value="ATP PHOSPHORIBOSYLTRANSFERASE"/>
    <property type="match status" value="1"/>
</dbReference>
<dbReference type="PANTHER" id="PTHR21403">
    <property type="entry name" value="ATP PHOSPHORIBOSYLTRANSFERASE ATP-PRTASE"/>
    <property type="match status" value="1"/>
</dbReference>
<dbReference type="Pfam" id="PF01634">
    <property type="entry name" value="HisG"/>
    <property type="match status" value="1"/>
</dbReference>
<dbReference type="Pfam" id="PF08029">
    <property type="entry name" value="HisG_C"/>
    <property type="match status" value="1"/>
</dbReference>
<dbReference type="SUPFAM" id="SSF54913">
    <property type="entry name" value="GlnB-like"/>
    <property type="match status" value="1"/>
</dbReference>
<dbReference type="SUPFAM" id="SSF53850">
    <property type="entry name" value="Periplasmic binding protein-like II"/>
    <property type="match status" value="1"/>
</dbReference>
<gene>
    <name evidence="1" type="primary">hisG</name>
    <name type="ordered locus">BVU_2361</name>
</gene>